<dbReference type="EC" id="6.1.1.15" evidence="1"/>
<dbReference type="EMBL" id="CP000939">
    <property type="protein sequence ID" value="ACA44448.1"/>
    <property type="molecule type" value="Genomic_DNA"/>
</dbReference>
<dbReference type="RefSeq" id="WP_003403877.1">
    <property type="nucleotide sequence ID" value="NC_010516.1"/>
</dbReference>
<dbReference type="SMR" id="B1IFI2"/>
<dbReference type="KEGG" id="cbb:CLD_1176"/>
<dbReference type="HOGENOM" id="CLU_001882_4_2_9"/>
<dbReference type="Proteomes" id="UP000008541">
    <property type="component" value="Chromosome"/>
</dbReference>
<dbReference type="GO" id="GO:0017101">
    <property type="term" value="C:aminoacyl-tRNA synthetase multienzyme complex"/>
    <property type="evidence" value="ECO:0007669"/>
    <property type="project" value="TreeGrafter"/>
</dbReference>
<dbReference type="GO" id="GO:0005737">
    <property type="term" value="C:cytoplasm"/>
    <property type="evidence" value="ECO:0007669"/>
    <property type="project" value="UniProtKB-SubCell"/>
</dbReference>
<dbReference type="GO" id="GO:0005524">
    <property type="term" value="F:ATP binding"/>
    <property type="evidence" value="ECO:0007669"/>
    <property type="project" value="UniProtKB-UniRule"/>
</dbReference>
<dbReference type="GO" id="GO:0140096">
    <property type="term" value="F:catalytic activity, acting on a protein"/>
    <property type="evidence" value="ECO:0007669"/>
    <property type="project" value="UniProtKB-ARBA"/>
</dbReference>
<dbReference type="GO" id="GO:0004827">
    <property type="term" value="F:proline-tRNA ligase activity"/>
    <property type="evidence" value="ECO:0007669"/>
    <property type="project" value="UniProtKB-UniRule"/>
</dbReference>
<dbReference type="GO" id="GO:0016740">
    <property type="term" value="F:transferase activity"/>
    <property type="evidence" value="ECO:0007669"/>
    <property type="project" value="UniProtKB-ARBA"/>
</dbReference>
<dbReference type="GO" id="GO:0006433">
    <property type="term" value="P:prolyl-tRNA aminoacylation"/>
    <property type="evidence" value="ECO:0007669"/>
    <property type="project" value="UniProtKB-UniRule"/>
</dbReference>
<dbReference type="CDD" id="cd00862">
    <property type="entry name" value="ProRS_anticodon_zinc"/>
    <property type="match status" value="1"/>
</dbReference>
<dbReference type="CDD" id="cd00778">
    <property type="entry name" value="ProRS_core_arch_euk"/>
    <property type="match status" value="1"/>
</dbReference>
<dbReference type="FunFam" id="3.40.50.800:FF:000005">
    <property type="entry name" value="bifunctional glutamate/proline--tRNA ligase"/>
    <property type="match status" value="1"/>
</dbReference>
<dbReference type="FunFam" id="3.30.110.30:FF:000005">
    <property type="entry name" value="Proline--tRNA ligase"/>
    <property type="match status" value="1"/>
</dbReference>
<dbReference type="FunFam" id="3.30.930.10:FF:000023">
    <property type="entry name" value="Proline--tRNA ligase"/>
    <property type="match status" value="1"/>
</dbReference>
<dbReference type="Gene3D" id="3.40.50.800">
    <property type="entry name" value="Anticodon-binding domain"/>
    <property type="match status" value="1"/>
</dbReference>
<dbReference type="Gene3D" id="3.30.930.10">
    <property type="entry name" value="Bira Bifunctional Protein, Domain 2"/>
    <property type="match status" value="1"/>
</dbReference>
<dbReference type="Gene3D" id="3.30.110.30">
    <property type="entry name" value="C-terminal domain of ProRS"/>
    <property type="match status" value="1"/>
</dbReference>
<dbReference type="HAMAP" id="MF_01571">
    <property type="entry name" value="Pro_tRNA_synth_type3"/>
    <property type="match status" value="1"/>
</dbReference>
<dbReference type="InterPro" id="IPR002314">
    <property type="entry name" value="aa-tRNA-synt_IIb"/>
</dbReference>
<dbReference type="InterPro" id="IPR006195">
    <property type="entry name" value="aa-tRNA-synth_II"/>
</dbReference>
<dbReference type="InterPro" id="IPR045864">
    <property type="entry name" value="aa-tRNA-synth_II/BPL/LPL"/>
</dbReference>
<dbReference type="InterPro" id="IPR004154">
    <property type="entry name" value="Anticodon-bd"/>
</dbReference>
<dbReference type="InterPro" id="IPR036621">
    <property type="entry name" value="Anticodon-bd_dom_sf"/>
</dbReference>
<dbReference type="InterPro" id="IPR002316">
    <property type="entry name" value="Pro-tRNA-ligase_IIa"/>
</dbReference>
<dbReference type="InterPro" id="IPR004499">
    <property type="entry name" value="Pro-tRNA-ligase_IIa_arc-type"/>
</dbReference>
<dbReference type="InterPro" id="IPR016061">
    <property type="entry name" value="Pro-tRNA_ligase_II_C"/>
</dbReference>
<dbReference type="InterPro" id="IPR017449">
    <property type="entry name" value="Pro-tRNA_synth_II"/>
</dbReference>
<dbReference type="InterPro" id="IPR033721">
    <property type="entry name" value="ProRS_core_arch_euk"/>
</dbReference>
<dbReference type="NCBIfam" id="TIGR00408">
    <property type="entry name" value="proS_fam_I"/>
    <property type="match status" value="1"/>
</dbReference>
<dbReference type="PANTHER" id="PTHR43382:SF2">
    <property type="entry name" value="BIFUNCTIONAL GLUTAMATE_PROLINE--TRNA LIGASE"/>
    <property type="match status" value="1"/>
</dbReference>
<dbReference type="PANTHER" id="PTHR43382">
    <property type="entry name" value="PROLYL-TRNA SYNTHETASE"/>
    <property type="match status" value="1"/>
</dbReference>
<dbReference type="Pfam" id="PF03129">
    <property type="entry name" value="HGTP_anticodon"/>
    <property type="match status" value="1"/>
</dbReference>
<dbReference type="Pfam" id="PF09180">
    <property type="entry name" value="ProRS-C_1"/>
    <property type="match status" value="1"/>
</dbReference>
<dbReference type="Pfam" id="PF00587">
    <property type="entry name" value="tRNA-synt_2b"/>
    <property type="match status" value="1"/>
</dbReference>
<dbReference type="PRINTS" id="PR01046">
    <property type="entry name" value="TRNASYNTHPRO"/>
</dbReference>
<dbReference type="SMART" id="SM00946">
    <property type="entry name" value="ProRS-C_1"/>
    <property type="match status" value="1"/>
</dbReference>
<dbReference type="SUPFAM" id="SSF64586">
    <property type="entry name" value="C-terminal domain of ProRS"/>
    <property type="match status" value="1"/>
</dbReference>
<dbReference type="SUPFAM" id="SSF52954">
    <property type="entry name" value="Class II aaRS ABD-related"/>
    <property type="match status" value="1"/>
</dbReference>
<dbReference type="SUPFAM" id="SSF55681">
    <property type="entry name" value="Class II aaRS and biotin synthetases"/>
    <property type="match status" value="1"/>
</dbReference>
<dbReference type="PROSITE" id="PS50862">
    <property type="entry name" value="AA_TRNA_LIGASE_II"/>
    <property type="match status" value="1"/>
</dbReference>
<feature type="chain" id="PRO_1000215557" description="Proline--tRNA ligase">
    <location>
        <begin position="1"/>
        <end position="478"/>
    </location>
</feature>
<protein>
    <recommendedName>
        <fullName evidence="1">Proline--tRNA ligase</fullName>
        <ecNumber evidence="1">6.1.1.15</ecNumber>
    </recommendedName>
    <alternativeName>
        <fullName evidence="1">Prolyl-tRNA synthetase</fullName>
        <shortName evidence="1">ProRS</shortName>
    </alternativeName>
</protein>
<name>SYP_CLOBK</name>
<accession>B1IFI2</accession>
<sequence length="478" mass="55007">MAKDKKFVEDITPMDEDFAQWYTDIVKKAELADYSSIRGCMIIRPNGYAIWENIQKYVDTKLKEYGHENVSMPIFIPENLLQKEKDHVEGFAPEVAWVTHGGDDELAERLCVRPTSETLFCEHYAKIVQSYKDLPKLYNQWCSVVRWEKTTRPFLRTTEFLWQEGHTIHETKEEAESHSLKILNMYSRLCEDMLAMPVVMGKKTDKEKFAGADDTYTIESLMHDGKALQAGTSHYLGQNFSKAFAIQFSDRNGKLDYPHYTTWAVTTRLIGAIIMVHGDNSGLKLPPRIAPTQAVIIPVAQHKEGVLEKAEELKERLAKVVRVKLDDSDKMPGWKYSEYEMKGIPLRIEIGPKDIEKNQAVLVRRDNREKTIVSLDEIEIKVQEMLDIIHNSMLEEAKKTRDEKTYVATNMEEFEDTIENKPGFIKAMWCGDKACEDKIREVTGATSRCMPFEQEVVSDTCVCCGKKAKNLVYWGRAY</sequence>
<proteinExistence type="inferred from homology"/>
<reference key="1">
    <citation type="journal article" date="2007" name="PLoS ONE">
        <title>Analysis of the neurotoxin complex genes in Clostridium botulinum A1-A4 and B1 strains: BoNT/A3, /Ba4 and /B1 clusters are located within plasmids.</title>
        <authorList>
            <person name="Smith T.J."/>
            <person name="Hill K.K."/>
            <person name="Foley B.T."/>
            <person name="Detter J.C."/>
            <person name="Munk A.C."/>
            <person name="Bruce D.C."/>
            <person name="Doggett N.A."/>
            <person name="Smith L.A."/>
            <person name="Marks J.D."/>
            <person name="Xie G."/>
            <person name="Brettin T.S."/>
        </authorList>
    </citation>
    <scope>NUCLEOTIDE SEQUENCE [LARGE SCALE GENOMIC DNA]</scope>
    <source>
        <strain>Okra / Type B1</strain>
    </source>
</reference>
<organism>
    <name type="scientific">Clostridium botulinum (strain Okra / Type B1)</name>
    <dbReference type="NCBI Taxonomy" id="498213"/>
    <lineage>
        <taxon>Bacteria</taxon>
        <taxon>Bacillati</taxon>
        <taxon>Bacillota</taxon>
        <taxon>Clostridia</taxon>
        <taxon>Eubacteriales</taxon>
        <taxon>Clostridiaceae</taxon>
        <taxon>Clostridium</taxon>
    </lineage>
</organism>
<gene>
    <name evidence="1" type="primary">proS</name>
    <name type="ordered locus">CLD_1176</name>
</gene>
<keyword id="KW-0030">Aminoacyl-tRNA synthetase</keyword>
<keyword id="KW-0067">ATP-binding</keyword>
<keyword id="KW-0963">Cytoplasm</keyword>
<keyword id="KW-0436">Ligase</keyword>
<keyword id="KW-0547">Nucleotide-binding</keyword>
<keyword id="KW-0648">Protein biosynthesis</keyword>
<comment type="function">
    <text evidence="1">Catalyzes the attachment of proline to tRNA(Pro) in a two-step reaction: proline is first activated by ATP to form Pro-AMP and then transferred to the acceptor end of tRNA(Pro).</text>
</comment>
<comment type="catalytic activity">
    <reaction evidence="1">
        <text>tRNA(Pro) + L-proline + ATP = L-prolyl-tRNA(Pro) + AMP + diphosphate</text>
        <dbReference type="Rhea" id="RHEA:14305"/>
        <dbReference type="Rhea" id="RHEA-COMP:9700"/>
        <dbReference type="Rhea" id="RHEA-COMP:9702"/>
        <dbReference type="ChEBI" id="CHEBI:30616"/>
        <dbReference type="ChEBI" id="CHEBI:33019"/>
        <dbReference type="ChEBI" id="CHEBI:60039"/>
        <dbReference type="ChEBI" id="CHEBI:78442"/>
        <dbReference type="ChEBI" id="CHEBI:78532"/>
        <dbReference type="ChEBI" id="CHEBI:456215"/>
        <dbReference type="EC" id="6.1.1.15"/>
    </reaction>
</comment>
<comment type="subunit">
    <text evidence="1">Homodimer.</text>
</comment>
<comment type="subcellular location">
    <subcellularLocation>
        <location evidence="1">Cytoplasm</location>
    </subcellularLocation>
</comment>
<comment type="domain">
    <text evidence="1">Consists of three domains: the N-terminal catalytic domain, the anticodon-binding domain and the C-terminal extension.</text>
</comment>
<comment type="similarity">
    <text evidence="1">Belongs to the class-II aminoacyl-tRNA synthetase family. ProS type 3 subfamily.</text>
</comment>
<evidence type="ECO:0000255" key="1">
    <source>
        <dbReference type="HAMAP-Rule" id="MF_01571"/>
    </source>
</evidence>